<evidence type="ECO:0000255" key="1">
    <source>
        <dbReference type="HAMAP-Rule" id="MF_04068"/>
    </source>
</evidence>
<name>M1_I75A0</name>
<organism>
    <name type="scientific">Influenza A virus (strain A/Beijing/39/1975 H3N2)</name>
    <dbReference type="NCBI Taxonomy" id="383596"/>
    <lineage>
        <taxon>Viruses</taxon>
        <taxon>Riboviria</taxon>
        <taxon>Orthornavirae</taxon>
        <taxon>Negarnaviricota</taxon>
        <taxon>Polyploviricotina</taxon>
        <taxon>Insthoviricetes</taxon>
        <taxon>Articulavirales</taxon>
        <taxon>Orthomyxoviridae</taxon>
        <taxon>Alphainfluenzavirus</taxon>
        <taxon>Alphainfluenzavirus influenzae</taxon>
        <taxon>Influenza A virus</taxon>
    </lineage>
</organism>
<sequence length="252" mass="27804">MSLLTEVETYVLSIVPSGPLKAEIAQRLEDVFAGKNTDLEALMEWLKTRPILSPLTKGILGFVFTLTVPSERGLQRRRFVQNALNGNGDPNNMDRAVKLYRKLKREITFHGAKEIALSYSAGALASCMGLIYNRMGAVTTEVAFGLVCATCEQIADSQHRSHRQMVATTNPLIRHENRMVLASTTAKAMEQMAGSSEQAAEAMEVASQARQMVQAMRAIGTHPSSSAGLKDDLLENLQAYQKRMGVQMQRFK</sequence>
<gene>
    <name evidence="1" type="primary">M</name>
</gene>
<organismHost>
    <name type="scientific">Aves</name>
    <dbReference type="NCBI Taxonomy" id="8782"/>
</organismHost>
<organismHost>
    <name type="scientific">Cetacea</name>
    <name type="common">whales</name>
    <dbReference type="NCBI Taxonomy" id="9721"/>
</organismHost>
<organismHost>
    <name type="scientific">Homo sapiens</name>
    <name type="common">Human</name>
    <dbReference type="NCBI Taxonomy" id="9606"/>
</organismHost>
<organismHost>
    <name type="scientific">Phocidae</name>
    <name type="common">true seals</name>
    <dbReference type="NCBI Taxonomy" id="9709"/>
</organismHost>
<organismHost>
    <name type="scientific">Sus scrofa</name>
    <name type="common">Pig</name>
    <dbReference type="NCBI Taxonomy" id="9823"/>
</organismHost>
<proteinExistence type="inferred from homology"/>
<comment type="function">
    <text evidence="1">Plays critical roles in virus replication, from virus entry and uncoating to assembly and budding of the virus particle. M1 binding to ribonucleocapsids (RNPs) in nucleus seems to inhibit viral transcription. Interaction of viral NEP with M1-RNP is thought to promote nuclear export of the complex, which is targeted to the virion assembly site at the apical plasma membrane in polarized epithelial cells. Interactions with NA and HA may bring M1, a non-raft-associated protein, into lipid rafts. Forms a continuous shell on the inner side of the lipid bilayer in virion, where it binds the RNP. During virus entry into cell, the M2 ion channel acidifies the internal virion core, inducing M1 dissociation from the RNP. M1-free RNPs are transported to the nucleus, where viral transcription and replication can take place.</text>
</comment>
<comment type="function">
    <text evidence="1">Determines the virion's shape: spherical or filamentous. Clinical isolates of influenza are characterized by the presence of significant proportion of filamentous virions, whereas after multiple passage on eggs or cell culture, virions have only spherical morphology. Filamentous virions are thought to be important to infect neighboring cells, and spherical virions more suited to spread through aerosol between hosts organisms.</text>
</comment>
<comment type="subunit">
    <text evidence="1">Homodimer and homomultimer. Interacts with NEP. Binds ribonucleocapsid by both interacting with genomic RNA and NP protein. May interact with HA and NA. Cannot bind NP without genomic RNA.</text>
</comment>
<comment type="subcellular location">
    <subcellularLocation>
        <location evidence="1">Virion membrane</location>
        <topology evidence="1">Peripheral membrane protein</topology>
        <orientation evidence="1">Cytoplasmic side</orientation>
    </subcellularLocation>
    <subcellularLocation>
        <location evidence="1">Host nucleus</location>
    </subcellularLocation>
</comment>
<comment type="alternative products">
    <event type="alternative splicing"/>
    <isoform>
        <id>Q30NP9-1</id>
        <name>M1</name>
        <sequence type="displayed"/>
    </isoform>
    <isoform>
        <id>Q30NQ0-1</id>
        <name>M2</name>
        <sequence type="external"/>
    </isoform>
    <text>Only the first 9 residues are shared by the 2 isoforms.</text>
</comment>
<comment type="miscellaneous">
    <text evidence="1">Most abundant protein in virion. When expressed alone can form virus-like particles in transfected cells.</text>
</comment>
<comment type="similarity">
    <text evidence="1">Belongs to the influenza viruses Matrix protein M1 family.</text>
</comment>
<dbReference type="EMBL" id="CY006045">
    <property type="protein sequence ID" value="ABB46393.1"/>
    <property type="molecule type" value="Genomic_RNA"/>
</dbReference>
<dbReference type="SMR" id="Q30NP9"/>
<dbReference type="Proteomes" id="UP000000827">
    <property type="component" value="Genome"/>
</dbReference>
<dbReference type="GO" id="GO:0042025">
    <property type="term" value="C:host cell nucleus"/>
    <property type="evidence" value="ECO:0007669"/>
    <property type="project" value="UniProtKB-SubCell"/>
</dbReference>
<dbReference type="GO" id="GO:0016020">
    <property type="term" value="C:membrane"/>
    <property type="evidence" value="ECO:0007669"/>
    <property type="project" value="UniProtKB-KW"/>
</dbReference>
<dbReference type="GO" id="GO:0055036">
    <property type="term" value="C:virion membrane"/>
    <property type="evidence" value="ECO:0007669"/>
    <property type="project" value="UniProtKB-SubCell"/>
</dbReference>
<dbReference type="GO" id="GO:0003723">
    <property type="term" value="F:RNA binding"/>
    <property type="evidence" value="ECO:0007669"/>
    <property type="project" value="UniProtKB-UniRule"/>
</dbReference>
<dbReference type="GO" id="GO:0039660">
    <property type="term" value="F:structural constituent of virion"/>
    <property type="evidence" value="ECO:0007669"/>
    <property type="project" value="UniProtKB-UniRule"/>
</dbReference>
<dbReference type="GO" id="GO:0046761">
    <property type="term" value="P:viral budding from plasma membrane"/>
    <property type="evidence" value="ECO:0007669"/>
    <property type="project" value="UniProtKB-UniRule"/>
</dbReference>
<dbReference type="FunFam" id="1.10.10.180:FF:000001">
    <property type="entry name" value="Matrix protein 1"/>
    <property type="match status" value="1"/>
</dbReference>
<dbReference type="FunFam" id="1.20.91.10:FF:000001">
    <property type="entry name" value="Matrix protein 1"/>
    <property type="match status" value="1"/>
</dbReference>
<dbReference type="Gene3D" id="1.10.10.180">
    <property type="match status" value="1"/>
</dbReference>
<dbReference type="Gene3D" id="1.20.91.10">
    <property type="match status" value="1"/>
</dbReference>
<dbReference type="HAMAP" id="MF_04068">
    <property type="entry name" value="INFV_M1"/>
    <property type="match status" value="1"/>
</dbReference>
<dbReference type="InterPro" id="IPR036039">
    <property type="entry name" value="Flu_matrix_M1"/>
</dbReference>
<dbReference type="InterPro" id="IPR013188">
    <property type="entry name" value="Flu_matrix_M1_C"/>
</dbReference>
<dbReference type="InterPro" id="IPR001561">
    <property type="entry name" value="Flu_matrix_M1_N"/>
</dbReference>
<dbReference type="InterPro" id="IPR015423">
    <property type="entry name" value="Flu_matrix_M1_N_sub1"/>
</dbReference>
<dbReference type="InterPro" id="IPR015799">
    <property type="entry name" value="Flu_matrix_M1_N_sub2"/>
</dbReference>
<dbReference type="InterPro" id="IPR037533">
    <property type="entry name" value="INFV_M1"/>
</dbReference>
<dbReference type="Pfam" id="PF00598">
    <property type="entry name" value="Flu_M1"/>
    <property type="match status" value="1"/>
</dbReference>
<dbReference type="Pfam" id="PF08289">
    <property type="entry name" value="Flu_M1_C"/>
    <property type="match status" value="1"/>
</dbReference>
<dbReference type="SMART" id="SM00759">
    <property type="entry name" value="Flu_M1_C"/>
    <property type="match status" value="1"/>
</dbReference>
<dbReference type="SUPFAM" id="SSF48145">
    <property type="entry name" value="Influenza virus matrix protein M1"/>
    <property type="match status" value="1"/>
</dbReference>
<feature type="chain" id="PRO_0000326296" description="Matrix protein 1">
    <location>
        <begin position="1"/>
        <end position="252"/>
    </location>
</feature>
<feature type="region of interest" description="Membrane-binding" evidence="1">
    <location>
        <begin position="1"/>
        <end position="164"/>
    </location>
</feature>
<feature type="region of interest" description="RNP-binding" evidence="1">
    <location>
        <begin position="165"/>
        <end position="252"/>
    </location>
</feature>
<feature type="short sequence motif" description="Nuclear localization signal" evidence="1">
    <location>
        <begin position="101"/>
        <end position="105"/>
    </location>
</feature>
<keyword id="KW-0025">Alternative splicing</keyword>
<keyword id="KW-1048">Host nucleus</keyword>
<keyword id="KW-0472">Membrane</keyword>
<keyword id="KW-0694">RNA-binding</keyword>
<keyword id="KW-0468">Viral matrix protein</keyword>
<keyword id="KW-0946">Virion</keyword>
<accession>Q30NP9</accession>
<reference key="1">
    <citation type="submission" date="2005-11" db="EMBL/GenBank/DDBJ databases">
        <title>The NIAID influenza genome sequencing project.</title>
        <authorList>
            <person name="Ghedin E."/>
            <person name="Spiro D."/>
            <person name="Miller N."/>
            <person name="Zaborsky J."/>
            <person name="Feldblyum T."/>
            <person name="Subbu V."/>
            <person name="Shumway M."/>
            <person name="Sparenborg J."/>
            <person name="Groveman L."/>
            <person name="Halpin R."/>
            <person name="Sitz J."/>
            <person name="Koo H."/>
            <person name="Salzberg S.L."/>
            <person name="Webster R.G."/>
            <person name="Hoffmann E."/>
            <person name="Krauss S."/>
            <person name="Naeve C."/>
            <person name="Bao Y."/>
            <person name="Bolotov P."/>
            <person name="Dernovoy D."/>
            <person name="Kiryutin B."/>
            <person name="Lipman D.J."/>
            <person name="Tatusova T."/>
        </authorList>
    </citation>
    <scope>NUCLEOTIDE SEQUENCE [GENOMIC RNA]</scope>
</reference>
<protein>
    <recommendedName>
        <fullName evidence="1">Matrix protein 1</fullName>
        <shortName evidence="1">M1</shortName>
    </recommendedName>
</protein>